<reference key="1">
    <citation type="journal article" date="1996" name="DNA Res.">
        <title>Sequence analysis of the genome of the unicellular cyanobacterium Synechocystis sp. strain PCC6803. II. Sequence determination of the entire genome and assignment of potential protein-coding regions.</title>
        <authorList>
            <person name="Kaneko T."/>
            <person name="Sato S."/>
            <person name="Kotani H."/>
            <person name="Tanaka A."/>
            <person name="Asamizu E."/>
            <person name="Nakamura Y."/>
            <person name="Miyajima N."/>
            <person name="Hirosawa M."/>
            <person name="Sugiura M."/>
            <person name="Sasamoto S."/>
            <person name="Kimura T."/>
            <person name="Hosouchi T."/>
            <person name="Matsuno A."/>
            <person name="Muraki A."/>
            <person name="Nakazaki N."/>
            <person name="Naruo K."/>
            <person name="Okumura S."/>
            <person name="Shimpo S."/>
            <person name="Takeuchi C."/>
            <person name="Wada T."/>
            <person name="Watanabe A."/>
            <person name="Yamada M."/>
            <person name="Yasuda M."/>
            <person name="Tabata S."/>
        </authorList>
    </citation>
    <scope>NUCLEOTIDE SEQUENCE [LARGE SCALE GENOMIC DNA]</scope>
    <source>
        <strain>ATCC 27184 / PCC 6803 / Kazusa</strain>
    </source>
</reference>
<sequence>MKPKNFPLARYVLGAMLAFLFVGVAQAQTETTSIAEVTYAINNLFLLAAAVLVLFMQAGFAMLEAGLSSHKNTVNVLFKNTFDVCVGVLLYFLFGYSLMYGENPVLGGFFGWGGFGITNNLDNVEGLSPQVDWLFQAAFAATAATIVSGAVMGRMYFKAYLIYSAVITGLVYPISGHWKWGGGWLDKLGFHDFAGSLLVHSVGGFAALAAVVVMGPRIGRFEGNKINSLGYQGITSSSLGVFILWVGWYGFNPGSQLAFVGALNTNTTMLIAVNTTLSAAAGGLAALAFDWITENKRKPNLLVTLNGILGGLVGITAGCDTVSNWSAIAIGVVAGILSVLGTKLLDRLRIDDGVGAWPVHGLCGIWGGIAVGIFSTNVEHKLSAQIVGSLVIPFWAFITMFFLFYVMDLWGILRVKPSQEKVGLDIVEHGQTEKGVEIAFED</sequence>
<dbReference type="EMBL" id="BA000022">
    <property type="protein sequence ID" value="BAA16952.1"/>
    <property type="molecule type" value="Genomic_DNA"/>
</dbReference>
<dbReference type="PIR" id="S74801">
    <property type="entry name" value="S74801"/>
</dbReference>
<dbReference type="SMR" id="P72935"/>
<dbReference type="FunCoup" id="P72935">
    <property type="interactions" value="411"/>
</dbReference>
<dbReference type="IntAct" id="P72935">
    <property type="interactions" value="1"/>
</dbReference>
<dbReference type="STRING" id="1148.gene:10497812"/>
<dbReference type="PaxDb" id="1148-1652026"/>
<dbReference type="EnsemblBacteria" id="BAA16952">
    <property type="protein sequence ID" value="BAA16952"/>
    <property type="gene ID" value="BAA16952"/>
</dbReference>
<dbReference type="KEGG" id="syn:sll1017"/>
<dbReference type="eggNOG" id="COG0004">
    <property type="taxonomic scope" value="Bacteria"/>
</dbReference>
<dbReference type="InParanoid" id="P72935"/>
<dbReference type="PhylomeDB" id="P72935"/>
<dbReference type="Proteomes" id="UP000001425">
    <property type="component" value="Chromosome"/>
</dbReference>
<dbReference type="GO" id="GO:0005886">
    <property type="term" value="C:plasma membrane"/>
    <property type="evidence" value="ECO:0007669"/>
    <property type="project" value="UniProtKB-SubCell"/>
</dbReference>
<dbReference type="GO" id="GO:0008519">
    <property type="term" value="F:ammonium channel activity"/>
    <property type="evidence" value="ECO:0007669"/>
    <property type="project" value="InterPro"/>
</dbReference>
<dbReference type="GO" id="GO:0097272">
    <property type="term" value="P:ammonium homeostasis"/>
    <property type="evidence" value="ECO:0000318"/>
    <property type="project" value="GO_Central"/>
</dbReference>
<dbReference type="GO" id="GO:0072488">
    <property type="term" value="P:ammonium transmembrane transport"/>
    <property type="evidence" value="ECO:0000318"/>
    <property type="project" value="GO_Central"/>
</dbReference>
<dbReference type="Gene3D" id="1.10.3430.10">
    <property type="entry name" value="Ammonium transporter AmtB like domains"/>
    <property type="match status" value="1"/>
</dbReference>
<dbReference type="InterPro" id="IPR029020">
    <property type="entry name" value="Ammonium/urea_transptr"/>
</dbReference>
<dbReference type="InterPro" id="IPR001905">
    <property type="entry name" value="Ammonium_transpt"/>
</dbReference>
<dbReference type="InterPro" id="IPR018047">
    <property type="entry name" value="Ammonium_transpt_CS"/>
</dbReference>
<dbReference type="InterPro" id="IPR024041">
    <property type="entry name" value="NH4_transpt_AmtB-like_dom"/>
</dbReference>
<dbReference type="InterPro" id="IPR002229">
    <property type="entry name" value="RhesusRHD"/>
</dbReference>
<dbReference type="NCBIfam" id="TIGR00836">
    <property type="entry name" value="amt"/>
    <property type="match status" value="1"/>
</dbReference>
<dbReference type="PANTHER" id="PTHR11730">
    <property type="entry name" value="AMMONIUM TRANSPORTER"/>
    <property type="match status" value="1"/>
</dbReference>
<dbReference type="PANTHER" id="PTHR11730:SF62">
    <property type="entry name" value="AMMONIUM TRANSPORTER SLL1017-RELATED"/>
    <property type="match status" value="1"/>
</dbReference>
<dbReference type="Pfam" id="PF00909">
    <property type="entry name" value="Ammonium_transp"/>
    <property type="match status" value="1"/>
</dbReference>
<dbReference type="PRINTS" id="PR00342">
    <property type="entry name" value="RHESUSRHD"/>
</dbReference>
<dbReference type="SUPFAM" id="SSF111352">
    <property type="entry name" value="Ammonium transporter"/>
    <property type="match status" value="1"/>
</dbReference>
<dbReference type="PROSITE" id="PS01219">
    <property type="entry name" value="AMMONIUM_TRANSP"/>
    <property type="match status" value="1"/>
</dbReference>
<organism>
    <name type="scientific">Synechocystis sp. (strain ATCC 27184 / PCC 6803 / Kazusa)</name>
    <dbReference type="NCBI Taxonomy" id="1111708"/>
    <lineage>
        <taxon>Bacteria</taxon>
        <taxon>Bacillati</taxon>
        <taxon>Cyanobacteriota</taxon>
        <taxon>Cyanophyceae</taxon>
        <taxon>Synechococcales</taxon>
        <taxon>Merismopediaceae</taxon>
        <taxon>Synechocystis</taxon>
    </lineage>
</organism>
<proteinExistence type="inferred from homology"/>
<keyword id="KW-0924">Ammonia transport</keyword>
<keyword id="KW-1003">Cell membrane</keyword>
<keyword id="KW-0472">Membrane</keyword>
<keyword id="KW-1185">Reference proteome</keyword>
<keyword id="KW-0812">Transmembrane</keyword>
<keyword id="KW-1133">Transmembrane helix</keyword>
<keyword id="KW-0813">Transport</keyword>
<feature type="chain" id="PRO_0000139763" description="Putative ammonium transporter sll1017">
    <location>
        <begin position="1"/>
        <end position="442"/>
    </location>
</feature>
<feature type="transmembrane region" description="Helical" evidence="1">
    <location>
        <begin position="5"/>
        <end position="25"/>
    </location>
</feature>
<feature type="transmembrane region" description="Helical" evidence="1">
    <location>
        <begin position="44"/>
        <end position="64"/>
    </location>
</feature>
<feature type="transmembrane region" description="Helical" evidence="1">
    <location>
        <begin position="81"/>
        <end position="101"/>
    </location>
</feature>
<feature type="transmembrane region" description="Helical" evidence="1">
    <location>
        <begin position="104"/>
        <end position="124"/>
    </location>
</feature>
<feature type="transmembrane region" description="Helical" evidence="1">
    <location>
        <begin position="133"/>
        <end position="153"/>
    </location>
</feature>
<feature type="transmembrane region" description="Helical" evidence="1">
    <location>
        <begin position="155"/>
        <end position="175"/>
    </location>
</feature>
<feature type="transmembrane region" description="Helical" evidence="1">
    <location>
        <begin position="193"/>
        <end position="213"/>
    </location>
</feature>
<feature type="transmembrane region" description="Helical" evidence="1">
    <location>
        <begin position="240"/>
        <end position="260"/>
    </location>
</feature>
<feature type="transmembrane region" description="Helical" evidence="1">
    <location>
        <begin position="269"/>
        <end position="289"/>
    </location>
</feature>
<feature type="transmembrane region" description="Helical" evidence="1">
    <location>
        <begin position="299"/>
        <end position="319"/>
    </location>
</feature>
<feature type="transmembrane region" description="Helical" evidence="1">
    <location>
        <begin position="325"/>
        <end position="345"/>
    </location>
</feature>
<feature type="transmembrane region" description="Helical" evidence="1">
    <location>
        <begin position="354"/>
        <end position="374"/>
    </location>
</feature>
<feature type="transmembrane region" description="Helical" evidence="1">
    <location>
        <begin position="386"/>
        <end position="406"/>
    </location>
</feature>
<protein>
    <recommendedName>
        <fullName>Putative ammonium transporter sll1017</fullName>
    </recommendedName>
</protein>
<name>Y1017_SYNY3</name>
<accession>P72935</accession>
<evidence type="ECO:0000255" key="1"/>
<evidence type="ECO:0000305" key="2"/>
<comment type="subcellular location">
    <subcellularLocation>
        <location evidence="2">Cell membrane</location>
        <topology evidence="2">Multi-pass membrane protein</topology>
    </subcellularLocation>
</comment>
<comment type="similarity">
    <text evidence="2">Belongs to the ammonia transporter channel (TC 1.A.11.2) family.</text>
</comment>
<gene>
    <name type="ordered locus">sll1017</name>
</gene>